<evidence type="ECO:0000255" key="1">
    <source>
        <dbReference type="PROSITE-ProRule" id="PRU00532"/>
    </source>
</evidence>
<evidence type="ECO:0000305" key="2"/>
<dbReference type="EMBL" id="L42023">
    <property type="protein sequence ID" value="AAC22341.1"/>
    <property type="molecule type" value="Genomic_DNA"/>
</dbReference>
<dbReference type="PIR" id="I64011">
    <property type="entry name" value="I64011"/>
</dbReference>
<dbReference type="RefSeq" id="NP_438837.1">
    <property type="nucleotide sequence ID" value="NC_000907.1"/>
</dbReference>
<dbReference type="SMR" id="P44036"/>
<dbReference type="STRING" id="71421.HI_0677"/>
<dbReference type="EnsemblBacteria" id="AAC22341">
    <property type="protein sequence ID" value="AAC22341"/>
    <property type="gene ID" value="HI_0677"/>
</dbReference>
<dbReference type="KEGG" id="hin:HI_0677"/>
<dbReference type="PATRIC" id="fig|71421.8.peg.707"/>
<dbReference type="eggNOG" id="COG0456">
    <property type="taxonomic scope" value="Bacteria"/>
</dbReference>
<dbReference type="HOGENOM" id="CLU_013985_34_9_6"/>
<dbReference type="OrthoDB" id="9792929at2"/>
<dbReference type="PhylomeDB" id="P44036"/>
<dbReference type="BioCyc" id="HINF71421:G1GJ1-712-MONOMER"/>
<dbReference type="Proteomes" id="UP000000579">
    <property type="component" value="Chromosome"/>
</dbReference>
<dbReference type="GO" id="GO:0016747">
    <property type="term" value="F:acyltransferase activity, transferring groups other than amino-acyl groups"/>
    <property type="evidence" value="ECO:0007669"/>
    <property type="project" value="InterPro"/>
</dbReference>
<dbReference type="Gene3D" id="3.40.630.30">
    <property type="match status" value="1"/>
</dbReference>
<dbReference type="InterPro" id="IPR016181">
    <property type="entry name" value="Acyl_CoA_acyltransferase"/>
</dbReference>
<dbReference type="InterPro" id="IPR050832">
    <property type="entry name" value="Bact_Acetyltransf"/>
</dbReference>
<dbReference type="InterPro" id="IPR000182">
    <property type="entry name" value="GNAT_dom"/>
</dbReference>
<dbReference type="PANTHER" id="PTHR43877:SF2">
    <property type="entry name" value="AMINOALKYLPHOSPHONATE N-ACETYLTRANSFERASE-RELATED"/>
    <property type="match status" value="1"/>
</dbReference>
<dbReference type="PANTHER" id="PTHR43877">
    <property type="entry name" value="AMINOALKYLPHOSPHONATE N-ACETYLTRANSFERASE-RELATED-RELATED"/>
    <property type="match status" value="1"/>
</dbReference>
<dbReference type="Pfam" id="PF00583">
    <property type="entry name" value="Acetyltransf_1"/>
    <property type="match status" value="1"/>
</dbReference>
<dbReference type="SUPFAM" id="SSF55729">
    <property type="entry name" value="Acyl-CoA N-acyltransferases (Nat)"/>
    <property type="match status" value="1"/>
</dbReference>
<dbReference type="PROSITE" id="PS51186">
    <property type="entry name" value="GNAT"/>
    <property type="match status" value="1"/>
</dbReference>
<keyword id="KW-0012">Acyltransferase</keyword>
<keyword id="KW-1185">Reference proteome</keyword>
<keyword id="KW-0808">Transferase</keyword>
<gene>
    <name type="ordered locus">HI_0677</name>
</gene>
<reference key="1">
    <citation type="journal article" date="1995" name="Science">
        <title>Whole-genome random sequencing and assembly of Haemophilus influenzae Rd.</title>
        <authorList>
            <person name="Fleischmann R.D."/>
            <person name="Adams M.D."/>
            <person name="White O."/>
            <person name="Clayton R.A."/>
            <person name="Kirkness E.F."/>
            <person name="Kerlavage A.R."/>
            <person name="Bult C.J."/>
            <person name="Tomb J.-F."/>
            <person name="Dougherty B.A."/>
            <person name="Merrick J.M."/>
            <person name="McKenney K."/>
            <person name="Sutton G.G."/>
            <person name="FitzHugh W."/>
            <person name="Fields C.A."/>
            <person name="Gocayne J.D."/>
            <person name="Scott J.D."/>
            <person name="Shirley R."/>
            <person name="Liu L.-I."/>
            <person name="Glodek A."/>
            <person name="Kelley J.M."/>
            <person name="Weidman J.F."/>
            <person name="Phillips C.A."/>
            <person name="Spriggs T."/>
            <person name="Hedblom E."/>
            <person name="Cotton M.D."/>
            <person name="Utterback T.R."/>
            <person name="Hanna M.C."/>
            <person name="Nguyen D.T."/>
            <person name="Saudek D.M."/>
            <person name="Brandon R.C."/>
            <person name="Fine L.D."/>
            <person name="Fritchman J.L."/>
            <person name="Fuhrmann J.L."/>
            <person name="Geoghagen N.S.M."/>
            <person name="Gnehm C.L."/>
            <person name="McDonald L.A."/>
            <person name="Small K.V."/>
            <person name="Fraser C.M."/>
            <person name="Smith H.O."/>
            <person name="Venter J.C."/>
        </authorList>
    </citation>
    <scope>NUCLEOTIDE SEQUENCE [LARGE SCALE GENOMIC DNA]</scope>
    <source>
        <strain>ATCC 51907 / DSM 11121 / KW20 / Rd</strain>
    </source>
</reference>
<accession>P44036</accession>
<protein>
    <recommendedName>
        <fullName evidence="2">Probable acetyltransferase HI_0677</fullName>
    </recommendedName>
</protein>
<sequence>MKLFKAEQWNIEVLLPLFEAYRQAYGQAENPERTLAFLTNRMRFNESLFFIAVDENEKAIGFVQLFPRLSSLQLQRYWQITDIFVLEHAQQTEIYAALISKAKDFVHFTQSNRLVAELAQNQYSMLESEGFKLNPKERLFELSLSC</sequence>
<feature type="chain" id="PRO_0000077944" description="Probable acetyltransferase HI_0677">
    <location>
        <begin position="1"/>
        <end position="146"/>
    </location>
</feature>
<feature type="domain" description="N-acetyltransferase" evidence="1">
    <location>
        <begin position="1"/>
        <end position="146"/>
    </location>
</feature>
<name>Y677_HAEIN</name>
<organism>
    <name type="scientific">Haemophilus influenzae (strain ATCC 51907 / DSM 11121 / KW20 / Rd)</name>
    <dbReference type="NCBI Taxonomy" id="71421"/>
    <lineage>
        <taxon>Bacteria</taxon>
        <taxon>Pseudomonadati</taxon>
        <taxon>Pseudomonadota</taxon>
        <taxon>Gammaproteobacteria</taxon>
        <taxon>Pasteurellales</taxon>
        <taxon>Pasteurellaceae</taxon>
        <taxon>Haemophilus</taxon>
    </lineage>
</organism>
<proteinExistence type="predicted"/>